<dbReference type="EMBL" id="AF467987">
    <property type="protein sequence ID" value="AAL77057.1"/>
    <property type="molecule type" value="mRNA"/>
</dbReference>
<dbReference type="PDB" id="1ZRX">
    <property type="method" value="NMR"/>
    <property type="chains" value="A=25-66"/>
</dbReference>
<dbReference type="PDBsum" id="1ZRX"/>
<dbReference type="SMR" id="Q8T9R8"/>
<dbReference type="EnsemblMetazoa" id="SCAU016937-RA">
    <property type="protein sequence ID" value="SCAU016937-PA"/>
    <property type="gene ID" value="SCAU016937"/>
</dbReference>
<dbReference type="VEuPathDB" id="VectorBase:SCAU016937"/>
<dbReference type="EvolutionaryTrace" id="Q8T9R8"/>
<dbReference type="Proteomes" id="UP000095300">
    <property type="component" value="Unassembled WGS sequence"/>
</dbReference>
<dbReference type="GO" id="GO:0005576">
    <property type="term" value="C:extracellular region"/>
    <property type="evidence" value="ECO:0000304"/>
    <property type="project" value="UniProtKB"/>
</dbReference>
<dbReference type="GO" id="GO:0042742">
    <property type="term" value="P:defense response to bacterium"/>
    <property type="evidence" value="ECO:0007669"/>
    <property type="project" value="UniProtKB-KW"/>
</dbReference>
<dbReference type="GO" id="GO:0050832">
    <property type="term" value="P:defense response to fungus"/>
    <property type="evidence" value="ECO:0000314"/>
    <property type="project" value="UniProtKB"/>
</dbReference>
<dbReference type="GO" id="GO:0045087">
    <property type="term" value="P:innate immune response"/>
    <property type="evidence" value="ECO:0007669"/>
    <property type="project" value="UniProtKB-KW"/>
</dbReference>
<dbReference type="GO" id="GO:0031640">
    <property type="term" value="P:killing of cells of another organism"/>
    <property type="evidence" value="ECO:0007669"/>
    <property type="project" value="UniProtKB-KW"/>
</dbReference>
<dbReference type="GO" id="GO:0006805">
    <property type="term" value="P:xenobiotic metabolic process"/>
    <property type="evidence" value="ECO:0000314"/>
    <property type="project" value="UniProtKB"/>
</dbReference>
<dbReference type="Gene3D" id="6.10.250.280">
    <property type="match status" value="1"/>
</dbReference>
<dbReference type="InterPro" id="IPR021037">
    <property type="entry name" value="Stomoxyn"/>
</dbReference>
<dbReference type="Pfam" id="PF11585">
    <property type="entry name" value="Stomoxyn"/>
    <property type="match status" value="1"/>
</dbReference>
<protein>
    <recommendedName>
        <fullName>Stomoxyn</fullName>
    </recommendedName>
</protein>
<comment type="function">
    <text evidence="1">Has antimicrobial activity against most Gram-positive and Gram-negative bacteria, filamentous fungi and yeasts tested. Has trypanolytic effect on T.b.rhodesiense and limited hemolytic activity against bovine red blood cells.</text>
</comment>
<comment type="function">
    <text evidence="1 2">May play an important role in protecting the stored blood in the anterior midgut from microorganisms prior to digestion. Adopts an amphipathic alpha-helical structure only in the presence of an organic solvent that mimics a phospholipid membrane.</text>
</comment>
<comment type="subcellular location">
    <subcellularLocation>
        <location evidence="1">Secreted</location>
    </subcellularLocation>
</comment>
<comment type="tissue specificity">
    <text evidence="1">Constitutively expressed in the adult anterior midgut; proventriculus, thoracic and reservoir regions.</text>
</comment>
<reference evidence="3" key="1">
    <citation type="journal article" date="2002" name="J. Biol. Chem.">
        <title>Epithelial innate immunity. A novel antimicrobial peptide with antiparasitic activity in the blood-sucking insect Stomoxys calcitrans.</title>
        <authorList>
            <person name="Boulanger N."/>
            <person name="Munks R.J.L."/>
            <person name="Hamilton J.V."/>
            <person name="Vovelle F."/>
            <person name="Brun R."/>
            <person name="Lehane M.J."/>
            <person name="Bulet P."/>
        </authorList>
    </citation>
    <scope>NUCLEOTIDE SEQUENCE [MRNA]</scope>
    <scope>PROTEIN SEQUENCE OF 25-57</scope>
    <scope>FUNCTION</scope>
    <scope>SUBCELLULAR LOCATION</scope>
    <scope>TISSUE SPECIFICITY</scope>
    <scope>AMIDATION AT THR-66</scope>
    <source>
        <tissue evidence="1">Midgut</tissue>
    </source>
</reference>
<reference key="2">
    <citation type="journal article" date="2006" name="Biopolymers">
        <title>Solution structures of stomoxyn and spinigerin, two insect antimicrobial peptides with an alpha-helical conformation.</title>
        <authorList>
            <person name="Landon C."/>
            <person name="Meudal H."/>
            <person name="Boulanger N."/>
            <person name="Bulet P."/>
            <person name="Vovelle F."/>
        </authorList>
    </citation>
    <scope>STRUCTURE BY NMR</scope>
</reference>
<keyword id="KW-0002">3D-structure</keyword>
<keyword id="KW-0027">Amidation</keyword>
<keyword id="KW-0044">Antibiotic</keyword>
<keyword id="KW-0929">Antimicrobial</keyword>
<keyword id="KW-0903">Direct protein sequencing</keyword>
<keyword id="KW-0295">Fungicide</keyword>
<keyword id="KW-0391">Immunity</keyword>
<keyword id="KW-0399">Innate immunity</keyword>
<keyword id="KW-0964">Secreted</keyword>
<keyword id="KW-0732">Signal</keyword>
<sequence length="67" mass="7173">MNFYKYLVVLVVLVLCLSATQTEARGFRKHFNKLVKKVKHTISETAHVAKDTAVIAGSGAAVVAATG</sequence>
<accession>Q8T9R8</accession>
<name>STMX_STOCA</name>
<organism evidence="4">
    <name type="scientific">Stomoxys calcitrans</name>
    <name type="common">Stable fly</name>
    <name type="synonym">Conops calcitrans</name>
    <dbReference type="NCBI Taxonomy" id="35570"/>
    <lineage>
        <taxon>Eukaryota</taxon>
        <taxon>Metazoa</taxon>
        <taxon>Ecdysozoa</taxon>
        <taxon>Arthropoda</taxon>
        <taxon>Hexapoda</taxon>
        <taxon>Insecta</taxon>
        <taxon>Pterygota</taxon>
        <taxon>Neoptera</taxon>
        <taxon>Endopterygota</taxon>
        <taxon>Diptera</taxon>
        <taxon>Brachycera</taxon>
        <taxon>Muscomorpha</taxon>
        <taxon>Muscoidea</taxon>
        <taxon>Muscidae</taxon>
        <taxon>Stomoxys</taxon>
    </lineage>
</organism>
<proteinExistence type="evidence at protein level"/>
<feature type="signal peptide" evidence="1">
    <location>
        <begin position="1"/>
        <end position="24"/>
    </location>
</feature>
<feature type="peptide" id="PRO_0000004950" description="Stomoxyn" evidence="1">
    <location>
        <begin position="25"/>
        <end position="66"/>
    </location>
</feature>
<feature type="modified residue" description="Threonine amide" evidence="1">
    <location>
        <position position="66"/>
    </location>
</feature>
<feature type="helix" evidence="5">
    <location>
        <begin position="28"/>
        <end position="46"/>
    </location>
</feature>
<feature type="helix" evidence="5">
    <location>
        <begin position="48"/>
        <end position="51"/>
    </location>
</feature>
<feature type="turn" evidence="5">
    <location>
        <begin position="52"/>
        <end position="55"/>
    </location>
</feature>
<feature type="helix" evidence="5">
    <location>
        <begin position="56"/>
        <end position="58"/>
    </location>
</feature>
<feature type="helix" evidence="5">
    <location>
        <begin position="60"/>
        <end position="65"/>
    </location>
</feature>
<evidence type="ECO:0000269" key="1">
    <source>
    </source>
</evidence>
<evidence type="ECO:0000303" key="2">
    <source>
    </source>
</evidence>
<evidence type="ECO:0000305" key="3"/>
<evidence type="ECO:0000312" key="4">
    <source>
        <dbReference type="EMBL" id="AAL77057.1"/>
    </source>
</evidence>
<evidence type="ECO:0007829" key="5">
    <source>
        <dbReference type="PDB" id="1ZRX"/>
    </source>
</evidence>